<gene>
    <name type="primary">eIF5A</name>
    <name type="ordered locus">UNCMA_30850</name>
    <name type="ORF">LRC52</name>
</gene>
<evidence type="ECO:0000255" key="1">
    <source>
        <dbReference type="HAMAP-Rule" id="MF_00085"/>
    </source>
</evidence>
<reference key="1">
    <citation type="journal article" date="2006" name="Science">
        <title>Genome of rice cluster I archaea -- the key methane producers in the rice rhizosphere.</title>
        <authorList>
            <person name="Erkel C."/>
            <person name="Kube M."/>
            <person name="Reinhardt R."/>
            <person name="Liesack W."/>
        </authorList>
    </citation>
    <scope>NUCLEOTIDE SEQUENCE [LARGE SCALE GENOMIC DNA]</scope>
    <source>
        <strain>DSM 22066 / NBRC 105507 / MRE50</strain>
    </source>
</reference>
<accession>Q0W941</accession>
<sequence>MKQQSEVKSLKEGKFVIIDDEPCQIVSVQHSKPGKHGAAKARVDAIGLFDGSKRSIVQPVDAKIYVPIVERKNAQVISIAGNMAQLMDTADYSTFELEIPEDLQGKINQGEEVQYMAAMGKLKFSIRQ</sequence>
<comment type="function">
    <text evidence="1">Functions by promoting the formation of the first peptide bond.</text>
</comment>
<comment type="subcellular location">
    <subcellularLocation>
        <location evidence="1">Cytoplasm</location>
    </subcellularLocation>
</comment>
<comment type="similarity">
    <text evidence="1">Belongs to the eIF-5A family.</text>
</comment>
<keyword id="KW-0963">Cytoplasm</keyword>
<keyword id="KW-0385">Hypusine</keyword>
<keyword id="KW-0396">Initiation factor</keyword>
<keyword id="KW-0648">Protein biosynthesis</keyword>
<keyword id="KW-1185">Reference proteome</keyword>
<proteinExistence type="inferred from homology"/>
<protein>
    <recommendedName>
        <fullName evidence="1">Translation initiation factor 5A</fullName>
    </recommendedName>
    <alternativeName>
        <fullName evidence="1">Hypusine-containing protein</fullName>
    </alternativeName>
    <alternativeName>
        <fullName evidence="1">eIF-5A</fullName>
    </alternativeName>
</protein>
<feature type="chain" id="PRO_1000007920" description="Translation initiation factor 5A">
    <location>
        <begin position="1"/>
        <end position="128"/>
    </location>
</feature>
<feature type="modified residue" description="Hypusine" evidence="1">
    <location>
        <position position="35"/>
    </location>
</feature>
<dbReference type="EMBL" id="AM114193">
    <property type="protein sequence ID" value="CAJ35085.1"/>
    <property type="molecule type" value="Genomic_DNA"/>
</dbReference>
<dbReference type="RefSeq" id="WP_012037400.1">
    <property type="nucleotide sequence ID" value="NC_009464.1"/>
</dbReference>
<dbReference type="SMR" id="Q0W941"/>
<dbReference type="STRING" id="351160.LRC52"/>
<dbReference type="GeneID" id="5143120"/>
<dbReference type="KEGG" id="rci:LRC52"/>
<dbReference type="eggNOG" id="arCOG04277">
    <property type="taxonomic scope" value="Archaea"/>
</dbReference>
<dbReference type="OrthoDB" id="23689at2157"/>
<dbReference type="Proteomes" id="UP000000663">
    <property type="component" value="Chromosome"/>
</dbReference>
<dbReference type="GO" id="GO:0005737">
    <property type="term" value="C:cytoplasm"/>
    <property type="evidence" value="ECO:0007669"/>
    <property type="project" value="UniProtKB-SubCell"/>
</dbReference>
<dbReference type="GO" id="GO:0043022">
    <property type="term" value="F:ribosome binding"/>
    <property type="evidence" value="ECO:0007669"/>
    <property type="project" value="InterPro"/>
</dbReference>
<dbReference type="GO" id="GO:0003723">
    <property type="term" value="F:RNA binding"/>
    <property type="evidence" value="ECO:0007669"/>
    <property type="project" value="InterPro"/>
</dbReference>
<dbReference type="GO" id="GO:0003746">
    <property type="term" value="F:translation elongation factor activity"/>
    <property type="evidence" value="ECO:0007669"/>
    <property type="project" value="InterPro"/>
</dbReference>
<dbReference type="GO" id="GO:0003743">
    <property type="term" value="F:translation initiation factor activity"/>
    <property type="evidence" value="ECO:0007669"/>
    <property type="project" value="UniProtKB-UniRule"/>
</dbReference>
<dbReference type="GO" id="GO:0045901">
    <property type="term" value="P:positive regulation of translational elongation"/>
    <property type="evidence" value="ECO:0007669"/>
    <property type="project" value="InterPro"/>
</dbReference>
<dbReference type="GO" id="GO:0045905">
    <property type="term" value="P:positive regulation of translational termination"/>
    <property type="evidence" value="ECO:0007669"/>
    <property type="project" value="InterPro"/>
</dbReference>
<dbReference type="CDD" id="cd04467">
    <property type="entry name" value="S1_aIF5A"/>
    <property type="match status" value="1"/>
</dbReference>
<dbReference type="FunFam" id="2.30.30.30:FF:000038">
    <property type="entry name" value="Translation initiation factor 5A"/>
    <property type="match status" value="1"/>
</dbReference>
<dbReference type="Gene3D" id="2.30.30.30">
    <property type="match status" value="1"/>
</dbReference>
<dbReference type="Gene3D" id="2.40.50.140">
    <property type="entry name" value="Nucleic acid-binding proteins"/>
    <property type="match status" value="1"/>
</dbReference>
<dbReference type="HAMAP" id="MF_00085">
    <property type="entry name" value="eIF_5A"/>
    <property type="match status" value="1"/>
</dbReference>
<dbReference type="InterPro" id="IPR001884">
    <property type="entry name" value="IF5A-like"/>
</dbReference>
<dbReference type="InterPro" id="IPR048670">
    <property type="entry name" value="IF5A-like_N"/>
</dbReference>
<dbReference type="InterPro" id="IPR012340">
    <property type="entry name" value="NA-bd_OB-fold"/>
</dbReference>
<dbReference type="InterPro" id="IPR014722">
    <property type="entry name" value="Rib_uL2_dom2"/>
</dbReference>
<dbReference type="InterPro" id="IPR019769">
    <property type="entry name" value="Trans_elong_IF5A_hypusine_site"/>
</dbReference>
<dbReference type="InterPro" id="IPR022847">
    <property type="entry name" value="Transl_elong_IF5A_arc"/>
</dbReference>
<dbReference type="InterPro" id="IPR020189">
    <property type="entry name" value="Transl_elong_IF5A_C"/>
</dbReference>
<dbReference type="InterPro" id="IPR008991">
    <property type="entry name" value="Translation_prot_SH3-like_sf"/>
</dbReference>
<dbReference type="NCBIfam" id="TIGR00037">
    <property type="entry name" value="eIF_5A"/>
    <property type="match status" value="1"/>
</dbReference>
<dbReference type="NCBIfam" id="NF003076">
    <property type="entry name" value="PRK03999.1"/>
    <property type="match status" value="1"/>
</dbReference>
<dbReference type="PANTHER" id="PTHR11673">
    <property type="entry name" value="TRANSLATION INITIATION FACTOR 5A FAMILY MEMBER"/>
    <property type="match status" value="1"/>
</dbReference>
<dbReference type="Pfam" id="PF01287">
    <property type="entry name" value="eIF-5a"/>
    <property type="match status" value="1"/>
</dbReference>
<dbReference type="Pfam" id="PF21485">
    <property type="entry name" value="IF5A-like_N"/>
    <property type="match status" value="1"/>
</dbReference>
<dbReference type="PIRSF" id="PIRSF003025">
    <property type="entry name" value="eIF5A"/>
    <property type="match status" value="1"/>
</dbReference>
<dbReference type="SMART" id="SM01376">
    <property type="entry name" value="eIF-5a"/>
    <property type="match status" value="1"/>
</dbReference>
<dbReference type="SUPFAM" id="SSF50249">
    <property type="entry name" value="Nucleic acid-binding proteins"/>
    <property type="match status" value="1"/>
</dbReference>
<dbReference type="SUPFAM" id="SSF50104">
    <property type="entry name" value="Translation proteins SH3-like domain"/>
    <property type="match status" value="1"/>
</dbReference>
<dbReference type="PROSITE" id="PS00302">
    <property type="entry name" value="IF5A_HYPUSINE"/>
    <property type="match status" value="1"/>
</dbReference>
<organism>
    <name type="scientific">Methanocella arvoryzae (strain DSM 22066 / NBRC 105507 / MRE50)</name>
    <dbReference type="NCBI Taxonomy" id="351160"/>
    <lineage>
        <taxon>Archaea</taxon>
        <taxon>Methanobacteriati</taxon>
        <taxon>Methanobacteriota</taxon>
        <taxon>Stenosarchaea group</taxon>
        <taxon>Methanomicrobia</taxon>
        <taxon>Methanocellales</taxon>
        <taxon>Methanocellaceae</taxon>
        <taxon>Methanocella</taxon>
    </lineage>
</organism>
<name>IF5A_METAR</name>